<feature type="chain" id="PRO_0000372262" description="Putative antiporter subunit mnhC2">
    <location>
        <begin position="1"/>
        <end position="114"/>
    </location>
</feature>
<feature type="transmembrane region" description="Helical" evidence="2">
    <location>
        <begin position="3"/>
        <end position="23"/>
    </location>
</feature>
<feature type="transmembrane region" description="Helical" evidence="2">
    <location>
        <begin position="25"/>
        <end position="45"/>
    </location>
</feature>
<feature type="transmembrane region" description="Helical" evidence="2">
    <location>
        <begin position="72"/>
        <end position="92"/>
    </location>
</feature>
<protein>
    <recommendedName>
        <fullName>Putative antiporter subunit mnhC2</fullName>
    </recommendedName>
    <alternativeName>
        <fullName>Mrp complex subunit C2</fullName>
    </alternativeName>
    <alternativeName>
        <fullName>Putative NADH-ubiquinone oxidoreductase subunit mnhC2</fullName>
    </alternativeName>
</protein>
<dbReference type="EMBL" id="AE015929">
    <property type="protein sequence ID" value="AAO03996.1"/>
    <property type="molecule type" value="Genomic_DNA"/>
</dbReference>
<dbReference type="RefSeq" id="NP_763954.1">
    <property type="nucleotide sequence ID" value="NC_004461.1"/>
</dbReference>
<dbReference type="RefSeq" id="WP_001832057.1">
    <property type="nucleotide sequence ID" value="NZ_WBME01000020.1"/>
</dbReference>
<dbReference type="SMR" id="Q8CQ48"/>
<dbReference type="GeneID" id="50019444"/>
<dbReference type="KEGG" id="sep:SE_0399"/>
<dbReference type="PATRIC" id="fig|176280.10.peg.373"/>
<dbReference type="eggNOG" id="COG1006">
    <property type="taxonomic scope" value="Bacteria"/>
</dbReference>
<dbReference type="HOGENOM" id="CLU_082058_3_1_9"/>
<dbReference type="OrthoDB" id="9799219at2"/>
<dbReference type="Proteomes" id="UP000001411">
    <property type="component" value="Chromosome"/>
</dbReference>
<dbReference type="GO" id="GO:0005886">
    <property type="term" value="C:plasma membrane"/>
    <property type="evidence" value="ECO:0007669"/>
    <property type="project" value="UniProtKB-SubCell"/>
</dbReference>
<dbReference type="GO" id="GO:0015297">
    <property type="term" value="F:antiporter activity"/>
    <property type="evidence" value="ECO:0007669"/>
    <property type="project" value="UniProtKB-KW"/>
</dbReference>
<dbReference type="GO" id="GO:0006811">
    <property type="term" value="P:monoatomic ion transport"/>
    <property type="evidence" value="ECO:0007669"/>
    <property type="project" value="UniProtKB-KW"/>
</dbReference>
<dbReference type="Gene3D" id="1.10.287.3510">
    <property type="match status" value="1"/>
</dbReference>
<dbReference type="InterPro" id="IPR050601">
    <property type="entry name" value="CPA3_antiporter_subunitC"/>
</dbReference>
<dbReference type="InterPro" id="IPR039428">
    <property type="entry name" value="NUOK/Mnh_C1-like"/>
</dbReference>
<dbReference type="NCBIfam" id="NF009303">
    <property type="entry name" value="PRK12660.1"/>
    <property type="match status" value="1"/>
</dbReference>
<dbReference type="PANTHER" id="PTHR34583">
    <property type="entry name" value="ANTIPORTER SUBUNIT MNHC2-RELATED"/>
    <property type="match status" value="1"/>
</dbReference>
<dbReference type="PANTHER" id="PTHR34583:SF2">
    <property type="entry name" value="ANTIPORTER SUBUNIT MNHC2-RELATED"/>
    <property type="match status" value="1"/>
</dbReference>
<dbReference type="Pfam" id="PF00420">
    <property type="entry name" value="Oxidored_q2"/>
    <property type="match status" value="1"/>
</dbReference>
<gene>
    <name type="primary">mnhC2</name>
    <name type="synonym">mrpC2</name>
    <name type="ordered locus">SE_0399</name>
</gene>
<organism>
    <name type="scientific">Staphylococcus epidermidis (strain ATCC 12228 / FDA PCI 1200)</name>
    <dbReference type="NCBI Taxonomy" id="176280"/>
    <lineage>
        <taxon>Bacteria</taxon>
        <taxon>Bacillati</taxon>
        <taxon>Bacillota</taxon>
        <taxon>Bacilli</taxon>
        <taxon>Bacillales</taxon>
        <taxon>Staphylococcaceae</taxon>
        <taxon>Staphylococcus</taxon>
    </lineage>
</organism>
<keyword id="KW-0050">Antiport</keyword>
<keyword id="KW-1003">Cell membrane</keyword>
<keyword id="KW-0406">Ion transport</keyword>
<keyword id="KW-0472">Membrane</keyword>
<keyword id="KW-0812">Transmembrane</keyword>
<keyword id="KW-1133">Transmembrane helix</keyword>
<keyword id="KW-0813">Transport</keyword>
<reference key="1">
    <citation type="journal article" date="2003" name="Mol. Microbiol.">
        <title>Genome-based analysis of virulence genes in a non-biofilm-forming Staphylococcus epidermidis strain (ATCC 12228).</title>
        <authorList>
            <person name="Zhang Y.-Q."/>
            <person name="Ren S.-X."/>
            <person name="Li H.-L."/>
            <person name="Wang Y.-X."/>
            <person name="Fu G."/>
            <person name="Yang J."/>
            <person name="Qin Z.-Q."/>
            <person name="Miao Y.-G."/>
            <person name="Wang W.-Y."/>
            <person name="Chen R.-S."/>
            <person name="Shen Y."/>
            <person name="Chen Z."/>
            <person name="Yuan Z.-H."/>
            <person name="Zhao G.-P."/>
            <person name="Qu D."/>
            <person name="Danchin A."/>
            <person name="Wen Y.-M."/>
        </authorList>
    </citation>
    <scope>NUCLEOTIDE SEQUENCE [LARGE SCALE GENOMIC DNA]</scope>
    <source>
        <strain>ATCC 12228 / FDA PCI 1200</strain>
    </source>
</reference>
<proteinExistence type="inferred from homology"/>
<accession>Q8CQ48</accession>
<name>MNHC2_STAES</name>
<evidence type="ECO:0000250" key="1"/>
<evidence type="ECO:0000255" key="2"/>
<evidence type="ECO:0000305" key="3"/>
<sequence>MNLILLLVIGFLVFIGTYMILSINLIRIVIGISIYTHAGNLIIMSMGKYGPHMSEPLIQGHAQNFVDPLLQAIVLTAIVIGFGMTAFLLVLIYRTYRVTKEDEISALKGDEDDE</sequence>
<comment type="subunit">
    <text evidence="1">May form a heterooligomeric complex that consists of seven subunits: mnhA2, mnhB2, mnhC2, mnhD2, mnhE2, mnhF2 and mnhG2.</text>
</comment>
<comment type="subcellular location">
    <subcellularLocation>
        <location evidence="3">Cell membrane</location>
        <topology evidence="3">Multi-pass membrane protein</topology>
    </subcellularLocation>
</comment>
<comment type="similarity">
    <text evidence="3">Belongs to the CPA3 antiporters (TC 2.A.63) subunit C family.</text>
</comment>